<name>B3GA1_HUMAN</name>
<accession>Q9P2W7</accession>
<accession>B7Z5Z8</accession>
<accession>Q96FS7</accession>
<comment type="function">
    <text evidence="2">Involved in the biosynthesis of L2/HNK-1 carbohydrate epitope on glycoproteins. Can also play a role in glycosaminoglycan biosynthesis. Substrates include asialo-orosomucoid (ASOR), asialo-fetuin, and asialo-neural cell adhesion molecule. Requires sphingomyelin for activity: stearoyl-sphingomyelin was the most effective, followed by palmitoyl-sphingomyelin and lignoceroyl-sphingomyelin. Activity was demonstrated only for sphingomyelin with a saturated fatty acid and not for that with an unsaturated fatty acid, regardless of the length of the acyl group.</text>
</comment>
<comment type="catalytic activity">
    <reaction evidence="2">
        <text>3-O-(beta-D-galactosyl-(1-&gt;3)-beta-D-galactosyl-(1-&gt;4)-beta-D-xylosyl)-L-seryl-[protein] + UDP-alpha-D-glucuronate = 3-O-(beta-D-GlcA-(1-&gt;3)-beta-D-Gal-(1-&gt;3)-beta-D-Gal-(1-&gt;4)-beta-D-Xyl)-L-seryl-[protein] + UDP + H(+)</text>
        <dbReference type="Rhea" id="RHEA:24168"/>
        <dbReference type="Rhea" id="RHEA-COMP:12571"/>
        <dbReference type="Rhea" id="RHEA-COMP:12573"/>
        <dbReference type="ChEBI" id="CHEBI:15378"/>
        <dbReference type="ChEBI" id="CHEBI:58052"/>
        <dbReference type="ChEBI" id="CHEBI:58223"/>
        <dbReference type="ChEBI" id="CHEBI:132090"/>
        <dbReference type="ChEBI" id="CHEBI:132093"/>
        <dbReference type="EC" id="2.4.1.135"/>
    </reaction>
</comment>
<comment type="cofactor">
    <cofactor>
        <name>Mn(2+)</name>
        <dbReference type="ChEBI" id="CHEBI:29035"/>
    </cofactor>
</comment>
<comment type="pathway">
    <text>Protein modification; protein glycosylation.</text>
</comment>
<comment type="subunit">
    <text evidence="2">Homodimer. Interacts with SAR1A.</text>
</comment>
<comment type="interaction">
    <interactant intactId="EBI-3918235">
        <id>Q9P2W7</id>
    </interactant>
    <interactant intactId="EBI-2807956">
        <id>Q96FZ5</id>
        <label>CMTM7</label>
    </interactant>
    <organismsDiffer>false</organismsDiffer>
    <experiments>3</experiments>
</comment>
<comment type="subcellular location">
    <molecule>Isoform 1</molecule>
    <subcellularLocation>
        <location evidence="2">Golgi apparatus membrane</location>
        <topology evidence="2">Single-pass type II membrane protein</topology>
    </subcellularLocation>
    <subcellularLocation>
        <location evidence="2">Secreted</location>
    </subcellularLocation>
</comment>
<comment type="subcellular location">
    <molecule>Isoform 2</molecule>
    <subcellularLocation>
        <location evidence="2">Golgi apparatus membrane</location>
        <topology evidence="2">Single-pass type II membrane protein</topology>
    </subcellularLocation>
    <subcellularLocation>
        <location evidence="2">Endoplasmic reticulum membrane</location>
    </subcellularLocation>
    <subcellularLocation>
        <location evidence="2">Secreted</location>
    </subcellularLocation>
</comment>
<comment type="alternative products">
    <event type="alternative splicing"/>
    <isoform>
        <id>Q9P2W7-1</id>
        <name>1</name>
        <name evidence="2">sGlcAT-P</name>
        <sequence type="displayed"/>
    </isoform>
    <isoform>
        <id>Q9P2W7-2</id>
        <name>2</name>
        <name evidence="2">lGlcAT-P</name>
        <sequence type="described" ref="VSP_058538"/>
    </isoform>
</comment>
<comment type="tissue specificity">
    <text>Mainly expressed in the brain.</text>
</comment>
<comment type="PTM">
    <text evidence="2">The soluble form derives from the membrane form by proteolytic processing.</text>
</comment>
<comment type="similarity">
    <text evidence="5">Belongs to the glycosyltransferase 43 family.</text>
</comment>
<protein>
    <recommendedName>
        <fullName evidence="5">Galactosylgalactosylxylosylprotein 3-beta-glucuronosyltransferase 1</fullName>
        <ecNumber evidence="2">2.4.1.135</ecNumber>
    </recommendedName>
    <alternativeName>
        <fullName>Beta-1,3-glucuronyltransferase 1</fullName>
    </alternativeName>
    <alternativeName>
        <fullName>Glucuronosyltransferase P</fullName>
        <shortName evidence="2">GlcAT-P</shortName>
    </alternativeName>
    <alternativeName>
        <fullName>UDP-GlcUA:glycoprotein beta-1,3-glucuronyltransferase</fullName>
        <shortName>GlcUAT-P</shortName>
    </alternativeName>
</protein>
<proteinExistence type="evidence at protein level"/>
<keyword id="KW-0002">3D-structure</keyword>
<keyword id="KW-0025">Alternative splicing</keyword>
<keyword id="KW-0256">Endoplasmic reticulum</keyword>
<keyword id="KW-0325">Glycoprotein</keyword>
<keyword id="KW-0333">Golgi apparatus</keyword>
<keyword id="KW-0464">Manganese</keyword>
<keyword id="KW-0472">Membrane</keyword>
<keyword id="KW-0479">Metal-binding</keyword>
<keyword id="KW-0597">Phosphoprotein</keyword>
<keyword id="KW-1267">Proteomics identification</keyword>
<keyword id="KW-1185">Reference proteome</keyword>
<keyword id="KW-0964">Secreted</keyword>
<keyword id="KW-0735">Signal-anchor</keyword>
<keyword id="KW-0808">Transferase</keyword>
<keyword id="KW-0812">Transmembrane</keyword>
<keyword id="KW-1133">Transmembrane helix</keyword>
<sequence length="334" mass="38256">MPKRRDILAIVLIVLPWTLLITVWHQSTLAPLLAVHKDEGSDPRRETPPGADPREYCTSDRDIVEVVRTEYVYTRPPPWSDTLPTIHVVTPTYSRPVQKAELTRMANTLLHVPNLHWLVVEDAPRRTPLTARLLRDTGLNYTHLHVETPRNYKLRGDARDPRIPRGTMQRNLALRWLRETFPRNSSQPGVVYFADDDNTYSLELFEEMRSTRRVSVWPVAFVGGLRYEAPRVNGAGKVVGWKTVFDPHRPFAIDMAGFAVNLRLILQRSQAYFKLRGVKGGYQESSLLRELVTLNDLEPKAANCTKILVWHTRTEKPVLVNEGKKGFTDPSVEI</sequence>
<feature type="chain" id="PRO_0000195167" description="Galactosylgalactosylxylosylprotein 3-beta-glucuronosyltransferase 1">
    <location>
        <begin position="1"/>
        <end position="334"/>
    </location>
</feature>
<feature type="topological domain" description="Cytoplasmic" evidence="3">
    <location>
        <begin position="1"/>
        <end position="6"/>
    </location>
</feature>
<feature type="transmembrane region" description="Helical; Signal-anchor for type II membrane protein" evidence="3">
    <location>
        <begin position="7"/>
        <end position="27"/>
    </location>
</feature>
<feature type="topological domain" description="Lumenal" evidence="3">
    <location>
        <begin position="28"/>
        <end position="334"/>
    </location>
</feature>
<feature type="region of interest" description="Essential for transport from endoplasmic reticulum to Golgi apparatus and interaction with SAR1A" evidence="2">
    <location>
        <begin position="3"/>
        <end position="5"/>
    </location>
</feature>
<feature type="region of interest" description="Disordered" evidence="4">
    <location>
        <begin position="37"/>
        <end position="56"/>
    </location>
</feature>
<feature type="region of interest" description="Interaction with galactose moiety of substrate glycoprotein">
    <location>
        <begin position="245"/>
        <end position="254"/>
    </location>
</feature>
<feature type="active site" description="Proton donor/acceptor">
    <location>
        <position position="284"/>
    </location>
</feature>
<feature type="binding site">
    <location>
        <begin position="91"/>
        <end position="93"/>
    </location>
    <ligand>
        <name>UDP-alpha-D-glucuronate</name>
        <dbReference type="ChEBI" id="CHEBI:58052"/>
    </ligand>
</feature>
<feature type="binding site">
    <location>
        <position position="122"/>
    </location>
    <ligand>
        <name>UDP-alpha-D-glucuronate</name>
        <dbReference type="ChEBI" id="CHEBI:58052"/>
    </ligand>
</feature>
<feature type="binding site">
    <location>
        <position position="165"/>
    </location>
    <ligand>
        <name>UDP-alpha-D-glucuronate</name>
        <dbReference type="ChEBI" id="CHEBI:58052"/>
    </ligand>
</feature>
<feature type="binding site" evidence="1">
    <location>
        <position position="170"/>
    </location>
    <ligand>
        <name>UDP-alpha-D-glucuronate</name>
        <dbReference type="ChEBI" id="CHEBI:58052"/>
    </ligand>
</feature>
<feature type="binding site">
    <location>
        <begin position="195"/>
        <end position="197"/>
    </location>
    <ligand>
        <name>UDP-alpha-D-glucuronate</name>
        <dbReference type="ChEBI" id="CHEBI:58052"/>
    </ligand>
</feature>
<feature type="binding site" evidence="1">
    <location>
        <position position="197"/>
    </location>
    <ligand>
        <name>Mn(2+)</name>
        <dbReference type="ChEBI" id="CHEBI:29035"/>
    </ligand>
</feature>
<feature type="binding site">
    <location>
        <begin position="311"/>
        <end position="313"/>
    </location>
    <ligand>
        <name>UDP-alpha-D-glucuronate</name>
        <dbReference type="ChEBI" id="CHEBI:58052"/>
    </ligand>
</feature>
<feature type="site" description="Interaction with galactose moiety of substrate glycoprotein">
    <location>
        <position position="228"/>
    </location>
</feature>
<feature type="site" description="Interaction with galactose moiety of substrate glycoprotein" evidence="1">
    <location>
        <position position="321"/>
    </location>
</feature>
<feature type="modified residue" description="Phosphothreonine" evidence="2">
    <location>
        <position position="103"/>
    </location>
</feature>
<feature type="modified residue" description="Phosphothreonine" evidence="2">
    <location>
        <position position="108"/>
    </location>
</feature>
<feature type="glycosylation site" description="N-linked (GlcNAc...) asparagine" evidence="3">
    <location>
        <position position="140"/>
    </location>
</feature>
<feature type="glycosylation site" description="N-linked (GlcNAc...) asparagine" evidence="3">
    <location>
        <position position="184"/>
    </location>
</feature>
<feature type="glycosylation site" description="N-linked (GlcNAc...) asparagine" evidence="3">
    <location>
        <position position="303"/>
    </location>
</feature>
<feature type="splice variant" id="VSP_058538" description="In isoform 2.">
    <original>M</original>
    <variation>MGNEEPWVQPALEM</variation>
    <location>
        <position position="1"/>
    </location>
</feature>
<feature type="sequence variant" id="VAR_044538" description="In dbSNP:rs35434644.">
    <original>A</original>
    <variation>T</variation>
    <location>
        <position position="131"/>
    </location>
</feature>
<feature type="sequence conflict" description="In Ref. 1; BAA96077." evidence="5" ref="1">
    <original>G</original>
    <variation>R</variation>
    <location>
        <position position="240"/>
    </location>
</feature>
<feature type="sequence conflict" description="In Ref. 2; BAH13084." evidence="5" ref="2">
    <original>Q</original>
    <variation>K</variation>
    <location>
        <position position="267"/>
    </location>
</feature>
<feature type="sequence conflict" description="In Ref. 2; BAH13084." evidence="5" ref="2">
    <original>K</original>
    <variation>R</variation>
    <location>
        <position position="306"/>
    </location>
</feature>
<feature type="strand" evidence="8">
    <location>
        <begin position="85"/>
        <end position="92"/>
    </location>
</feature>
<feature type="helix" evidence="8">
    <location>
        <begin position="98"/>
        <end position="109"/>
    </location>
</feature>
<feature type="strand" evidence="8">
    <location>
        <begin position="112"/>
        <end position="125"/>
    </location>
</feature>
<feature type="helix" evidence="8">
    <location>
        <begin position="128"/>
        <end position="137"/>
    </location>
</feature>
<feature type="strand" evidence="8">
    <location>
        <begin position="140"/>
        <end position="145"/>
    </location>
</feature>
<feature type="helix" evidence="8">
    <location>
        <begin position="150"/>
        <end position="153"/>
    </location>
</feature>
<feature type="helix" evidence="8">
    <location>
        <begin position="167"/>
        <end position="180"/>
    </location>
</feature>
<feature type="strand" evidence="8">
    <location>
        <begin position="183"/>
        <end position="185"/>
    </location>
</feature>
<feature type="strand" evidence="8">
    <location>
        <begin position="189"/>
        <end position="193"/>
    </location>
</feature>
<feature type="strand" evidence="8">
    <location>
        <begin position="198"/>
        <end position="200"/>
    </location>
</feature>
<feature type="helix" evidence="8">
    <location>
        <begin position="202"/>
        <end position="209"/>
    </location>
</feature>
<feature type="strand" evidence="8">
    <location>
        <begin position="212"/>
        <end position="216"/>
    </location>
</feature>
<feature type="strand" evidence="8">
    <location>
        <begin position="219"/>
        <end position="221"/>
    </location>
</feature>
<feature type="strand" evidence="8">
    <location>
        <begin position="225"/>
        <end position="232"/>
    </location>
</feature>
<feature type="strand" evidence="8">
    <location>
        <begin position="238"/>
        <end position="242"/>
    </location>
</feature>
<feature type="strand" evidence="7">
    <location>
        <begin position="244"/>
        <end position="246"/>
    </location>
</feature>
<feature type="helix" evidence="8">
    <location>
        <begin position="255"/>
        <end position="257"/>
    </location>
</feature>
<feature type="strand" evidence="8">
    <location>
        <begin position="258"/>
        <end position="261"/>
    </location>
</feature>
<feature type="helix" evidence="8">
    <location>
        <begin position="262"/>
        <end position="267"/>
    </location>
</feature>
<feature type="strand" evidence="8">
    <location>
        <begin position="275"/>
        <end position="278"/>
    </location>
</feature>
<feature type="helix" evidence="8">
    <location>
        <begin position="283"/>
        <end position="291"/>
    </location>
</feature>
<feature type="helix" evidence="8">
    <location>
        <begin position="294"/>
        <end position="296"/>
    </location>
</feature>
<feature type="strand" evidence="8">
    <location>
        <begin position="297"/>
        <end position="299"/>
    </location>
</feature>
<feature type="helix" evidence="8">
    <location>
        <begin position="301"/>
        <end position="304"/>
    </location>
</feature>
<feature type="helix" evidence="8">
    <location>
        <begin position="320"/>
        <end position="322"/>
    </location>
</feature>
<feature type="turn" evidence="8">
    <location>
        <begin position="323"/>
        <end position="325"/>
    </location>
</feature>
<dbReference type="EC" id="2.4.1.135" evidence="2"/>
<dbReference type="EMBL" id="AB029396">
    <property type="protein sequence ID" value="BAA96077.1"/>
    <property type="molecule type" value="mRNA"/>
</dbReference>
<dbReference type="EMBL" id="AK299637">
    <property type="protein sequence ID" value="BAH13084.1"/>
    <property type="molecule type" value="mRNA"/>
</dbReference>
<dbReference type="EMBL" id="CR457098">
    <property type="protein sequence ID" value="CAG33379.1"/>
    <property type="molecule type" value="mRNA"/>
</dbReference>
<dbReference type="EMBL" id="BC010466">
    <property type="protein sequence ID" value="AAH10466.1"/>
    <property type="molecule type" value="mRNA"/>
</dbReference>
<dbReference type="CCDS" id="CCDS8500.1">
    <molecule id="Q9P2W7-1"/>
</dbReference>
<dbReference type="RefSeq" id="NP_001354902.1">
    <molecule id="Q9P2W7-2"/>
    <property type="nucleotide sequence ID" value="NM_001367973.1"/>
</dbReference>
<dbReference type="RefSeq" id="NP_061114.2">
    <molecule id="Q9P2W7-1"/>
    <property type="nucleotide sequence ID" value="NM_018644.3"/>
</dbReference>
<dbReference type="RefSeq" id="NP_473366.1">
    <molecule id="Q9P2W7-1"/>
    <property type="nucleotide sequence ID" value="NM_054025.3"/>
</dbReference>
<dbReference type="RefSeq" id="XP_005271563.1">
    <property type="nucleotide sequence ID" value="XM_005271506.3"/>
</dbReference>
<dbReference type="RefSeq" id="XP_011541053.1">
    <property type="nucleotide sequence ID" value="XM_011542751.2"/>
</dbReference>
<dbReference type="RefSeq" id="XP_011541055.1">
    <molecule id="Q9P2W7-2"/>
    <property type="nucleotide sequence ID" value="XM_011542753.3"/>
</dbReference>
<dbReference type="RefSeq" id="XP_016873039.1">
    <property type="nucleotide sequence ID" value="XM_017017550.1"/>
</dbReference>
<dbReference type="RefSeq" id="XP_016873040.1">
    <molecule id="Q9P2W7-2"/>
    <property type="nucleotide sequence ID" value="XM_017017551.3"/>
</dbReference>
<dbReference type="RefSeq" id="XP_024304207.1">
    <molecule id="Q9P2W7-2"/>
    <property type="nucleotide sequence ID" value="XM_024448439.1"/>
</dbReference>
<dbReference type="RefSeq" id="XP_047282727.1">
    <molecule id="Q9P2W7-2"/>
    <property type="nucleotide sequence ID" value="XM_047426771.1"/>
</dbReference>
<dbReference type="RefSeq" id="XP_047282728.1">
    <molecule id="Q9P2W7-2"/>
    <property type="nucleotide sequence ID" value="XM_047426772.1"/>
</dbReference>
<dbReference type="RefSeq" id="XP_047282729.1">
    <molecule id="Q9P2W7-1"/>
    <property type="nucleotide sequence ID" value="XM_047426773.1"/>
</dbReference>
<dbReference type="RefSeq" id="XP_054224404.1">
    <molecule id="Q9P2W7-2"/>
    <property type="nucleotide sequence ID" value="XM_054368429.1"/>
</dbReference>
<dbReference type="RefSeq" id="XP_054224405.1">
    <molecule id="Q9P2W7-2"/>
    <property type="nucleotide sequence ID" value="XM_054368430.1"/>
</dbReference>
<dbReference type="RefSeq" id="XP_054224406.1">
    <molecule id="Q9P2W7-2"/>
    <property type="nucleotide sequence ID" value="XM_054368431.1"/>
</dbReference>
<dbReference type="RefSeq" id="XP_054224407.1">
    <molecule id="Q9P2W7-2"/>
    <property type="nucleotide sequence ID" value="XM_054368432.1"/>
</dbReference>
<dbReference type="RefSeq" id="XP_054224408.1">
    <molecule id="Q9P2W7-2"/>
    <property type="nucleotide sequence ID" value="XM_054368433.1"/>
</dbReference>
<dbReference type="RefSeq" id="XP_054224409.1">
    <molecule id="Q9P2W7-1"/>
    <property type="nucleotide sequence ID" value="XM_054368434.1"/>
</dbReference>
<dbReference type="PDB" id="1V82">
    <property type="method" value="X-ray"/>
    <property type="resolution" value="1.85 A"/>
    <property type="chains" value="A/B=83-334"/>
</dbReference>
<dbReference type="PDB" id="1V83">
    <property type="method" value="X-ray"/>
    <property type="resolution" value="1.90 A"/>
    <property type="chains" value="A/B=83-334"/>
</dbReference>
<dbReference type="PDB" id="1V84">
    <property type="method" value="X-ray"/>
    <property type="resolution" value="1.82 A"/>
    <property type="chains" value="A/B=83-334"/>
</dbReference>
<dbReference type="PDBsum" id="1V82"/>
<dbReference type="PDBsum" id="1V83"/>
<dbReference type="PDBsum" id="1V84"/>
<dbReference type="SMR" id="Q9P2W7"/>
<dbReference type="BioGRID" id="117990">
    <property type="interactions" value="391"/>
</dbReference>
<dbReference type="FunCoup" id="Q9P2W7">
    <property type="interactions" value="421"/>
</dbReference>
<dbReference type="IntAct" id="Q9P2W7">
    <property type="interactions" value="17"/>
</dbReference>
<dbReference type="STRING" id="9606.ENSP00000433847"/>
<dbReference type="DrugBank" id="DB01694">
    <property type="generic name" value="D-tartaric acid"/>
</dbReference>
<dbReference type="DrugBank" id="DB03435">
    <property type="generic name" value="Uridine-5'-Diphosphate"/>
</dbReference>
<dbReference type="CAZy" id="GT43">
    <property type="family name" value="Glycosyltransferase Family 43"/>
</dbReference>
<dbReference type="GlyConnect" id="1254">
    <property type="glycosylation" value="1 N-Linked glycan (1 site)"/>
</dbReference>
<dbReference type="GlyCosmos" id="Q9P2W7">
    <property type="glycosylation" value="3 sites, 1 glycan"/>
</dbReference>
<dbReference type="GlyGen" id="Q9P2W7">
    <property type="glycosylation" value="3 sites, 3 N-linked glycans (1 site)"/>
</dbReference>
<dbReference type="iPTMnet" id="Q9P2W7"/>
<dbReference type="PhosphoSitePlus" id="Q9P2W7"/>
<dbReference type="BioMuta" id="B3GAT1"/>
<dbReference type="DMDM" id="205830910"/>
<dbReference type="jPOST" id="Q9P2W7"/>
<dbReference type="MassIVE" id="Q9P2W7"/>
<dbReference type="PaxDb" id="9606-ENSP00000433847"/>
<dbReference type="PeptideAtlas" id="Q9P2W7"/>
<dbReference type="ProteomicsDB" id="83905"/>
<dbReference type="Antibodypedia" id="3739">
    <property type="antibodies" value="1600 antibodies from 46 providers"/>
</dbReference>
<dbReference type="DNASU" id="27087"/>
<dbReference type="Ensembl" id="ENST00000312527.9">
    <molecule id="Q9P2W7-1"/>
    <property type="protein sequence ID" value="ENSP00000307875.4"/>
    <property type="gene ID" value="ENSG00000109956.13"/>
</dbReference>
<dbReference type="Ensembl" id="ENST00000392580.5">
    <molecule id="Q9P2W7-1"/>
    <property type="protein sequence ID" value="ENSP00000376359.1"/>
    <property type="gene ID" value="ENSG00000109956.13"/>
</dbReference>
<dbReference type="Ensembl" id="ENST00000524765.1">
    <molecule id="Q9P2W7-1"/>
    <property type="protein sequence ID" value="ENSP00000433847.1"/>
    <property type="gene ID" value="ENSG00000109956.13"/>
</dbReference>
<dbReference type="GeneID" id="27087"/>
<dbReference type="KEGG" id="hsa:27087"/>
<dbReference type="MANE-Select" id="ENST00000312527.9">
    <property type="protein sequence ID" value="ENSP00000307875.4"/>
    <property type="RefSeq nucleotide sequence ID" value="NM_054025.3"/>
    <property type="RefSeq protein sequence ID" value="NP_473366.1"/>
</dbReference>
<dbReference type="UCSC" id="uc001qhq.4">
    <molecule id="Q9P2W7-1"/>
    <property type="organism name" value="human"/>
</dbReference>
<dbReference type="AGR" id="HGNC:921"/>
<dbReference type="CTD" id="27087"/>
<dbReference type="DisGeNET" id="27087"/>
<dbReference type="GeneCards" id="B3GAT1"/>
<dbReference type="HGNC" id="HGNC:921">
    <property type="gene designation" value="B3GAT1"/>
</dbReference>
<dbReference type="HPA" id="ENSG00000109956">
    <property type="expression patterns" value="Tissue enriched (brain)"/>
</dbReference>
<dbReference type="MIM" id="151290">
    <property type="type" value="gene"/>
</dbReference>
<dbReference type="neXtProt" id="NX_Q9P2W7"/>
<dbReference type="OpenTargets" id="ENSG00000109956"/>
<dbReference type="PharmGKB" id="PA25215"/>
<dbReference type="VEuPathDB" id="HostDB:ENSG00000109956"/>
<dbReference type="eggNOG" id="KOG1476">
    <property type="taxonomic scope" value="Eukaryota"/>
</dbReference>
<dbReference type="GeneTree" id="ENSGT00940000157165"/>
<dbReference type="HOGENOM" id="CLU_045177_1_0_1"/>
<dbReference type="InParanoid" id="Q9P2W7"/>
<dbReference type="OMA" id="DSREYCM"/>
<dbReference type="OrthoDB" id="675023at2759"/>
<dbReference type="PAN-GO" id="Q9P2W7">
    <property type="GO annotations" value="4 GO annotations based on evolutionary models"/>
</dbReference>
<dbReference type="PhylomeDB" id="Q9P2W7"/>
<dbReference type="TreeFam" id="TF313522"/>
<dbReference type="BioCyc" id="MetaCyc:HS03272-MONOMER"/>
<dbReference type="BRENDA" id="2.4.1.135">
    <property type="organism ID" value="2681"/>
</dbReference>
<dbReference type="PathwayCommons" id="Q9P2W7"/>
<dbReference type="Reactome" id="R-HSA-1971475">
    <property type="pathway name" value="A tetrasaccharide linker sequence is required for GAG synthesis"/>
</dbReference>
<dbReference type="SignaLink" id="Q9P2W7"/>
<dbReference type="UniPathway" id="UPA00378"/>
<dbReference type="BioGRID-ORCS" id="27087">
    <property type="hits" value="10 hits in 1147 CRISPR screens"/>
</dbReference>
<dbReference type="ChiTaRS" id="B3GAT1">
    <property type="organism name" value="human"/>
</dbReference>
<dbReference type="EvolutionaryTrace" id="Q9P2W7"/>
<dbReference type="GeneWiki" id="B3GAT1"/>
<dbReference type="GenomeRNAi" id="27087"/>
<dbReference type="Pharos" id="Q9P2W7">
    <property type="development level" value="Tbio"/>
</dbReference>
<dbReference type="PRO" id="PR:Q9P2W7"/>
<dbReference type="Proteomes" id="UP000005640">
    <property type="component" value="Chromosome 11"/>
</dbReference>
<dbReference type="RNAct" id="Q9P2W7">
    <property type="molecule type" value="protein"/>
</dbReference>
<dbReference type="Bgee" id="ENSG00000109956">
    <property type="expression patterns" value="Expressed in cortical plate and 134 other cell types or tissues"/>
</dbReference>
<dbReference type="GO" id="GO:0005789">
    <property type="term" value="C:endoplasmic reticulum membrane"/>
    <property type="evidence" value="ECO:0000250"/>
    <property type="project" value="UniProtKB"/>
</dbReference>
<dbReference type="GO" id="GO:0005576">
    <property type="term" value="C:extracellular region"/>
    <property type="evidence" value="ECO:0007669"/>
    <property type="project" value="UniProtKB-SubCell"/>
</dbReference>
<dbReference type="GO" id="GO:0000139">
    <property type="term" value="C:Golgi membrane"/>
    <property type="evidence" value="ECO:0000250"/>
    <property type="project" value="UniProtKB"/>
</dbReference>
<dbReference type="GO" id="GO:0043231">
    <property type="term" value="C:intracellular membrane-bounded organelle"/>
    <property type="evidence" value="ECO:0000314"/>
    <property type="project" value="HPA"/>
</dbReference>
<dbReference type="GO" id="GO:0016020">
    <property type="term" value="C:membrane"/>
    <property type="evidence" value="ECO:0000304"/>
    <property type="project" value="ProtInc"/>
</dbReference>
<dbReference type="GO" id="GO:0015018">
    <property type="term" value="F:galactosylgalactosylxylosylprotein 3-beta-glucuronosyltransferase activity"/>
    <property type="evidence" value="ECO:0000250"/>
    <property type="project" value="UniProtKB"/>
</dbReference>
<dbReference type="GO" id="GO:0046872">
    <property type="term" value="F:metal ion binding"/>
    <property type="evidence" value="ECO:0007669"/>
    <property type="project" value="UniProtKB-KW"/>
</dbReference>
<dbReference type="GO" id="GO:0005975">
    <property type="term" value="P:carbohydrate metabolic process"/>
    <property type="evidence" value="ECO:0000318"/>
    <property type="project" value="GO_Central"/>
</dbReference>
<dbReference type="GO" id="GO:0050650">
    <property type="term" value="P:chondroitin sulfate proteoglycan biosynthetic process"/>
    <property type="evidence" value="ECO:0000318"/>
    <property type="project" value="GO_Central"/>
</dbReference>
<dbReference type="GO" id="GO:0006486">
    <property type="term" value="P:protein glycosylation"/>
    <property type="evidence" value="ECO:0007669"/>
    <property type="project" value="UniProtKB-UniPathway"/>
</dbReference>
<dbReference type="GO" id="GO:0008542">
    <property type="term" value="P:visual learning"/>
    <property type="evidence" value="ECO:0007669"/>
    <property type="project" value="Ensembl"/>
</dbReference>
<dbReference type="CDD" id="cd00218">
    <property type="entry name" value="GlcAT-I"/>
    <property type="match status" value="1"/>
</dbReference>
<dbReference type="FunFam" id="3.90.550.10:FF:000010">
    <property type="entry name" value="Galactosylgalactosylxylosylprotein 3-beta-glucuronosyltransferase"/>
    <property type="match status" value="1"/>
</dbReference>
<dbReference type="Gene3D" id="3.90.550.10">
    <property type="entry name" value="Spore Coat Polysaccharide Biosynthesis Protein SpsA, Chain A"/>
    <property type="match status" value="1"/>
</dbReference>
<dbReference type="InterPro" id="IPR005027">
    <property type="entry name" value="Glyco_trans_43"/>
</dbReference>
<dbReference type="InterPro" id="IPR029044">
    <property type="entry name" value="Nucleotide-diphossugar_trans"/>
</dbReference>
<dbReference type="PANTHER" id="PTHR10896:SF21">
    <property type="entry name" value="GALACTOSYLGALACTOSYLXYLOSYLPROTEIN 3-BETA-GLUCURONOSYLTRANSFERASE 1"/>
    <property type="match status" value="1"/>
</dbReference>
<dbReference type="PANTHER" id="PTHR10896">
    <property type="entry name" value="GALACTOSYLGALACTOSYLXYLOSYLPROTEIN 3-BETA-GLUCURONOSYLTRANSFERASE BETA-1,3-GLUCURONYLTRANSFERASE"/>
    <property type="match status" value="1"/>
</dbReference>
<dbReference type="Pfam" id="PF03360">
    <property type="entry name" value="Glyco_transf_43"/>
    <property type="match status" value="1"/>
</dbReference>
<dbReference type="SUPFAM" id="SSF53448">
    <property type="entry name" value="Nucleotide-diphospho-sugar transferases"/>
    <property type="match status" value="1"/>
</dbReference>
<evidence type="ECO:0000250" key="1"/>
<evidence type="ECO:0000250" key="2">
    <source>
        <dbReference type="UniProtKB" id="O35789"/>
    </source>
</evidence>
<evidence type="ECO:0000255" key="3"/>
<evidence type="ECO:0000256" key="4">
    <source>
        <dbReference type="SAM" id="MobiDB-lite"/>
    </source>
</evidence>
<evidence type="ECO:0000305" key="5"/>
<evidence type="ECO:0000312" key="6">
    <source>
        <dbReference type="HGNC" id="HGNC:921"/>
    </source>
</evidence>
<evidence type="ECO:0007829" key="7">
    <source>
        <dbReference type="PDB" id="1V83"/>
    </source>
</evidence>
<evidence type="ECO:0007829" key="8">
    <source>
        <dbReference type="PDB" id="1V84"/>
    </source>
</evidence>
<gene>
    <name evidence="6" type="primary">B3GAT1</name>
    <name type="synonym">GLCATP</name>
</gene>
<organism>
    <name type="scientific">Homo sapiens</name>
    <name type="common">Human</name>
    <dbReference type="NCBI Taxonomy" id="9606"/>
    <lineage>
        <taxon>Eukaryota</taxon>
        <taxon>Metazoa</taxon>
        <taxon>Chordata</taxon>
        <taxon>Craniata</taxon>
        <taxon>Vertebrata</taxon>
        <taxon>Euteleostomi</taxon>
        <taxon>Mammalia</taxon>
        <taxon>Eutheria</taxon>
        <taxon>Euarchontoglires</taxon>
        <taxon>Primates</taxon>
        <taxon>Haplorrhini</taxon>
        <taxon>Catarrhini</taxon>
        <taxon>Hominidae</taxon>
        <taxon>Homo</taxon>
    </lineage>
</organism>
<reference key="1">
    <citation type="journal article" date="2000" name="Genomics">
        <title>Cloning and chromosomal mapping of human glucuronyltransferase involved in biosynthesis of the HNK-1 carbohydrate epitope.</title>
        <authorList>
            <person name="Mitsumoto Y."/>
            <person name="Oka S."/>
            <person name="Sakuma H."/>
            <person name="Inazawa J."/>
            <person name="Kawasaki T."/>
        </authorList>
    </citation>
    <scope>NUCLEOTIDE SEQUENCE [MRNA] (ISOFORM 1)</scope>
    <source>
        <tissue>Brain</tissue>
    </source>
</reference>
<reference key="2">
    <citation type="journal article" date="2004" name="Nat. Genet.">
        <title>Complete sequencing and characterization of 21,243 full-length human cDNAs.</title>
        <authorList>
            <person name="Ota T."/>
            <person name="Suzuki Y."/>
            <person name="Nishikawa T."/>
            <person name="Otsuki T."/>
            <person name="Sugiyama T."/>
            <person name="Irie R."/>
            <person name="Wakamatsu A."/>
            <person name="Hayashi K."/>
            <person name="Sato H."/>
            <person name="Nagai K."/>
            <person name="Kimura K."/>
            <person name="Makita H."/>
            <person name="Sekine M."/>
            <person name="Obayashi M."/>
            <person name="Nishi T."/>
            <person name="Shibahara T."/>
            <person name="Tanaka T."/>
            <person name="Ishii S."/>
            <person name="Yamamoto J."/>
            <person name="Saito K."/>
            <person name="Kawai Y."/>
            <person name="Isono Y."/>
            <person name="Nakamura Y."/>
            <person name="Nagahari K."/>
            <person name="Murakami K."/>
            <person name="Yasuda T."/>
            <person name="Iwayanagi T."/>
            <person name="Wagatsuma M."/>
            <person name="Shiratori A."/>
            <person name="Sudo H."/>
            <person name="Hosoiri T."/>
            <person name="Kaku Y."/>
            <person name="Kodaira H."/>
            <person name="Kondo H."/>
            <person name="Sugawara M."/>
            <person name="Takahashi M."/>
            <person name="Kanda K."/>
            <person name="Yokoi T."/>
            <person name="Furuya T."/>
            <person name="Kikkawa E."/>
            <person name="Omura Y."/>
            <person name="Abe K."/>
            <person name="Kamihara K."/>
            <person name="Katsuta N."/>
            <person name="Sato K."/>
            <person name="Tanikawa M."/>
            <person name="Yamazaki M."/>
            <person name="Ninomiya K."/>
            <person name="Ishibashi T."/>
            <person name="Yamashita H."/>
            <person name="Murakawa K."/>
            <person name="Fujimori K."/>
            <person name="Tanai H."/>
            <person name="Kimata M."/>
            <person name="Watanabe M."/>
            <person name="Hiraoka S."/>
            <person name="Chiba Y."/>
            <person name="Ishida S."/>
            <person name="Ono Y."/>
            <person name="Takiguchi S."/>
            <person name="Watanabe S."/>
            <person name="Yosida M."/>
            <person name="Hotuta T."/>
            <person name="Kusano J."/>
            <person name="Kanehori K."/>
            <person name="Takahashi-Fujii A."/>
            <person name="Hara H."/>
            <person name="Tanase T.-O."/>
            <person name="Nomura Y."/>
            <person name="Togiya S."/>
            <person name="Komai F."/>
            <person name="Hara R."/>
            <person name="Takeuchi K."/>
            <person name="Arita M."/>
            <person name="Imose N."/>
            <person name="Musashino K."/>
            <person name="Yuuki H."/>
            <person name="Oshima A."/>
            <person name="Sasaki N."/>
            <person name="Aotsuka S."/>
            <person name="Yoshikawa Y."/>
            <person name="Matsunawa H."/>
            <person name="Ichihara T."/>
            <person name="Shiohata N."/>
            <person name="Sano S."/>
            <person name="Moriya S."/>
            <person name="Momiyama H."/>
            <person name="Satoh N."/>
            <person name="Takami S."/>
            <person name="Terashima Y."/>
            <person name="Suzuki O."/>
            <person name="Nakagawa S."/>
            <person name="Senoh A."/>
            <person name="Mizoguchi H."/>
            <person name="Goto Y."/>
            <person name="Shimizu F."/>
            <person name="Wakebe H."/>
            <person name="Hishigaki H."/>
            <person name="Watanabe T."/>
            <person name="Sugiyama A."/>
            <person name="Takemoto M."/>
            <person name="Kawakami B."/>
            <person name="Yamazaki M."/>
            <person name="Watanabe K."/>
            <person name="Kumagai A."/>
            <person name="Itakura S."/>
            <person name="Fukuzumi Y."/>
            <person name="Fujimori Y."/>
            <person name="Komiyama M."/>
            <person name="Tashiro H."/>
            <person name="Tanigami A."/>
            <person name="Fujiwara T."/>
            <person name="Ono T."/>
            <person name="Yamada K."/>
            <person name="Fujii Y."/>
            <person name="Ozaki K."/>
            <person name="Hirao M."/>
            <person name="Ohmori Y."/>
            <person name="Kawabata A."/>
            <person name="Hikiji T."/>
            <person name="Kobatake N."/>
            <person name="Inagaki H."/>
            <person name="Ikema Y."/>
            <person name="Okamoto S."/>
            <person name="Okitani R."/>
            <person name="Kawakami T."/>
            <person name="Noguchi S."/>
            <person name="Itoh T."/>
            <person name="Shigeta K."/>
            <person name="Senba T."/>
            <person name="Matsumura K."/>
            <person name="Nakajima Y."/>
            <person name="Mizuno T."/>
            <person name="Morinaga M."/>
            <person name="Sasaki M."/>
            <person name="Togashi T."/>
            <person name="Oyama M."/>
            <person name="Hata H."/>
            <person name="Watanabe M."/>
            <person name="Komatsu T."/>
            <person name="Mizushima-Sugano J."/>
            <person name="Satoh T."/>
            <person name="Shirai Y."/>
            <person name="Takahashi Y."/>
            <person name="Nakagawa K."/>
            <person name="Okumura K."/>
            <person name="Nagase T."/>
            <person name="Nomura N."/>
            <person name="Kikuchi H."/>
            <person name="Masuho Y."/>
            <person name="Yamashita R."/>
            <person name="Nakai K."/>
            <person name="Yada T."/>
            <person name="Nakamura Y."/>
            <person name="Ohara O."/>
            <person name="Isogai T."/>
            <person name="Sugano S."/>
        </authorList>
    </citation>
    <scope>NUCLEOTIDE SEQUENCE [LARGE SCALE MRNA] (ISOFORM 2)</scope>
    <source>
        <tissue>Brain</tissue>
    </source>
</reference>
<reference key="3">
    <citation type="submission" date="2004-06" db="EMBL/GenBank/DDBJ databases">
        <title>Cloning of human full open reading frames in Gateway(TM) system entry vector (pDONR201).</title>
        <authorList>
            <person name="Ebert L."/>
            <person name="Schick M."/>
            <person name="Neubert P."/>
            <person name="Schatten R."/>
            <person name="Henze S."/>
            <person name="Korn B."/>
        </authorList>
    </citation>
    <scope>NUCLEOTIDE SEQUENCE [LARGE SCALE MRNA] (ISOFORM 1)</scope>
</reference>
<reference key="4">
    <citation type="journal article" date="2006" name="Nature">
        <title>Human chromosome 11 DNA sequence and analysis including novel gene identification.</title>
        <authorList>
            <person name="Taylor T.D."/>
            <person name="Noguchi H."/>
            <person name="Totoki Y."/>
            <person name="Toyoda A."/>
            <person name="Kuroki Y."/>
            <person name="Dewar K."/>
            <person name="Lloyd C."/>
            <person name="Itoh T."/>
            <person name="Takeda T."/>
            <person name="Kim D.-W."/>
            <person name="She X."/>
            <person name="Barlow K.F."/>
            <person name="Bloom T."/>
            <person name="Bruford E."/>
            <person name="Chang J.L."/>
            <person name="Cuomo C.A."/>
            <person name="Eichler E."/>
            <person name="FitzGerald M.G."/>
            <person name="Jaffe D.B."/>
            <person name="LaButti K."/>
            <person name="Nicol R."/>
            <person name="Park H.-S."/>
            <person name="Seaman C."/>
            <person name="Sougnez C."/>
            <person name="Yang X."/>
            <person name="Zimmer A.R."/>
            <person name="Zody M.C."/>
            <person name="Birren B.W."/>
            <person name="Nusbaum C."/>
            <person name="Fujiyama A."/>
            <person name="Hattori M."/>
            <person name="Rogers J."/>
            <person name="Lander E.S."/>
            <person name="Sakaki Y."/>
        </authorList>
    </citation>
    <scope>NUCLEOTIDE SEQUENCE [LARGE SCALE GENOMIC DNA]</scope>
</reference>
<reference key="5">
    <citation type="journal article" date="2004" name="Genome Res.">
        <title>The status, quality, and expansion of the NIH full-length cDNA project: the Mammalian Gene Collection (MGC).</title>
        <authorList>
            <consortium name="The MGC Project Team"/>
        </authorList>
    </citation>
    <scope>NUCLEOTIDE SEQUENCE [LARGE SCALE MRNA] (ISOFORM 1)</scope>
    <source>
        <tissue>Brain</tissue>
    </source>
</reference>
<reference key="6">
    <citation type="journal article" date="2004" name="J. Biol. Chem.">
        <title>Structural basis for acceptor substrate recognition of a human glucuronyltransferase, GlcAT-P, an enzyme critical in the biosynthesis of the carbohydrate epitope HNK-1.</title>
        <authorList>
            <person name="Kakuda S."/>
            <person name="Shiba T."/>
            <person name="Ishiguro M."/>
            <person name="Tagawa H."/>
            <person name="Oka S."/>
            <person name="Kajihara Y."/>
            <person name="Kawasaki T."/>
            <person name="Wakatsuki S."/>
            <person name="Kato R."/>
        </authorList>
    </citation>
    <scope>X-RAY CRYSTALLOGRAPHY (1.85 ANGSTROMS) OF 83-334 IN COMPLEX WITH UDP-GLUCURONIC ACID AND GALACTOSE MOIETY OF SUBSTRATE GLYCOPROTEIN</scope>
</reference>